<keyword id="KW-0046">Antibiotic resistance</keyword>
<keyword id="KW-0997">Cell inner membrane</keyword>
<keyword id="KW-1003">Cell membrane</keyword>
<keyword id="KW-0472">Membrane</keyword>
<keyword id="KW-0812">Transmembrane</keyword>
<keyword id="KW-1133">Transmembrane helix</keyword>
<keyword id="KW-0813">Transport</keyword>
<sequence length="391" mass="41506">MSRFLICSFALVLLYPAGIDMYLVGLPRIAADLNASEAQLHIAFSVYLAGMAAAMLFAGKVADRSGRKPVAIPGAALFIIASVFCSLAETSTLFLAGRFLQGLGAGCCYVVAFAILRDTLDDRRRAKVLSLLNGITCIIPVLAPVLGHLIMLKFPWQSLFWAMAMMGIAVLMLSLFILKETRPASPAASDKPRENSESLLNRFFLSRVVITTLSVSVILTFVNTSPVLLMEIMGFERGEYATIMALTAGVSMTVSFSTPFALGIFKPRTLMITSQVLFLAAGITLAVSPSHAVSLFGITLICAGFSVGFGVAMSQALGPFSLRAGVASSTLGIAQVCGSSLWIWLAAVVGIGAWNMLIGILIACSIVSLLLIMFVAPGRPVAAHEEIHHHA</sequence>
<name>MDTL_ECOLC</name>
<protein>
    <recommendedName>
        <fullName evidence="1">Multidrug resistance protein MdtL</fullName>
    </recommendedName>
</protein>
<comment type="function">
    <text evidence="1">Confers resistance to chloramphenicol.</text>
</comment>
<comment type="subcellular location">
    <subcellularLocation>
        <location evidence="1">Cell inner membrane</location>
        <topology evidence="1">Multi-pass membrane protein</topology>
    </subcellularLocation>
</comment>
<comment type="similarity">
    <text evidence="1">Belongs to the major facilitator superfamily. DHA1 family. MdtL (TC 2.A.1.2.22) subfamily.</text>
</comment>
<evidence type="ECO:0000255" key="1">
    <source>
        <dbReference type="HAMAP-Rule" id="MF_01530"/>
    </source>
</evidence>
<gene>
    <name evidence="1" type="primary">mdtL</name>
    <name type="ordered locus">EcolC_4284</name>
</gene>
<organism>
    <name type="scientific">Escherichia coli (strain ATCC 8739 / DSM 1576 / NBRC 3972 / NCIMB 8545 / WDCM 00012 / Crooks)</name>
    <dbReference type="NCBI Taxonomy" id="481805"/>
    <lineage>
        <taxon>Bacteria</taxon>
        <taxon>Pseudomonadati</taxon>
        <taxon>Pseudomonadota</taxon>
        <taxon>Gammaproteobacteria</taxon>
        <taxon>Enterobacterales</taxon>
        <taxon>Enterobacteriaceae</taxon>
        <taxon>Escherichia</taxon>
    </lineage>
</organism>
<feature type="chain" id="PRO_1000087591" description="Multidrug resistance protein MdtL">
    <location>
        <begin position="1"/>
        <end position="391"/>
    </location>
</feature>
<feature type="transmembrane region" description="Helical" evidence="1">
    <location>
        <begin position="4"/>
        <end position="24"/>
    </location>
</feature>
<feature type="transmembrane region" description="Helical" evidence="1">
    <location>
        <begin position="42"/>
        <end position="62"/>
    </location>
</feature>
<feature type="transmembrane region" description="Helical" evidence="1">
    <location>
        <begin position="69"/>
        <end position="89"/>
    </location>
</feature>
<feature type="transmembrane region" description="Helical" evidence="1">
    <location>
        <begin position="93"/>
        <end position="113"/>
    </location>
</feature>
<feature type="transmembrane region" description="Helical" evidence="1">
    <location>
        <begin position="131"/>
        <end position="151"/>
    </location>
</feature>
<feature type="transmembrane region" description="Helical" evidence="1">
    <location>
        <begin position="158"/>
        <end position="178"/>
    </location>
</feature>
<feature type="transmembrane region" description="Helical" evidence="1">
    <location>
        <begin position="203"/>
        <end position="222"/>
    </location>
</feature>
<feature type="transmembrane region" description="Helical" evidence="1">
    <location>
        <begin position="245"/>
        <end position="265"/>
    </location>
</feature>
<feature type="transmembrane region" description="Helical" evidence="1">
    <location>
        <begin position="269"/>
        <end position="289"/>
    </location>
</feature>
<feature type="transmembrane region" description="Helical" evidence="1">
    <location>
        <begin position="293"/>
        <end position="313"/>
    </location>
</feature>
<feature type="transmembrane region" description="Helical" evidence="1">
    <location>
        <begin position="331"/>
        <end position="351"/>
    </location>
</feature>
<feature type="transmembrane region" description="Helical" evidence="1">
    <location>
        <begin position="356"/>
        <end position="376"/>
    </location>
</feature>
<dbReference type="EMBL" id="CP000946">
    <property type="protein sequence ID" value="ACA79880.1"/>
    <property type="molecule type" value="Genomic_DNA"/>
</dbReference>
<dbReference type="RefSeq" id="WP_000085987.1">
    <property type="nucleotide sequence ID" value="NZ_MTFT01000013.1"/>
</dbReference>
<dbReference type="SMR" id="B1IX28"/>
<dbReference type="GeneID" id="93778451"/>
<dbReference type="KEGG" id="ecl:EcolC_4284"/>
<dbReference type="HOGENOM" id="CLU_001265_47_1_6"/>
<dbReference type="GO" id="GO:0005886">
    <property type="term" value="C:plasma membrane"/>
    <property type="evidence" value="ECO:0007669"/>
    <property type="project" value="UniProtKB-SubCell"/>
</dbReference>
<dbReference type="GO" id="GO:0022857">
    <property type="term" value="F:transmembrane transporter activity"/>
    <property type="evidence" value="ECO:0007669"/>
    <property type="project" value="UniProtKB-UniRule"/>
</dbReference>
<dbReference type="GO" id="GO:0046677">
    <property type="term" value="P:response to antibiotic"/>
    <property type="evidence" value="ECO:0007669"/>
    <property type="project" value="UniProtKB-KW"/>
</dbReference>
<dbReference type="CDD" id="cd17320">
    <property type="entry name" value="MFS_MdfA_MDR_like"/>
    <property type="match status" value="1"/>
</dbReference>
<dbReference type="FunFam" id="1.20.1720.10:FF:000003">
    <property type="entry name" value="Multidrug resistance protein MdtL"/>
    <property type="match status" value="1"/>
</dbReference>
<dbReference type="Gene3D" id="1.20.1720.10">
    <property type="entry name" value="Multidrug resistance protein D"/>
    <property type="match status" value="1"/>
</dbReference>
<dbReference type="HAMAP" id="MF_01530">
    <property type="entry name" value="MFS_MdtL"/>
    <property type="match status" value="1"/>
</dbReference>
<dbReference type="InterPro" id="IPR011701">
    <property type="entry name" value="MFS"/>
</dbReference>
<dbReference type="InterPro" id="IPR020846">
    <property type="entry name" value="MFS_dom"/>
</dbReference>
<dbReference type="InterPro" id="IPR050189">
    <property type="entry name" value="MFS_Efflux_Transporters"/>
</dbReference>
<dbReference type="InterPro" id="IPR036259">
    <property type="entry name" value="MFS_trans_sf"/>
</dbReference>
<dbReference type="InterPro" id="IPR023697">
    <property type="entry name" value="Multidrug-R_MdtL"/>
</dbReference>
<dbReference type="NCBIfam" id="NF007782">
    <property type="entry name" value="PRK10473.1"/>
    <property type="match status" value="1"/>
</dbReference>
<dbReference type="PANTHER" id="PTHR43124:SF3">
    <property type="entry name" value="CHLORAMPHENICOL EFFLUX PUMP RV0191"/>
    <property type="match status" value="1"/>
</dbReference>
<dbReference type="PANTHER" id="PTHR43124">
    <property type="entry name" value="PURINE EFFLUX PUMP PBUE"/>
    <property type="match status" value="1"/>
</dbReference>
<dbReference type="Pfam" id="PF07690">
    <property type="entry name" value="MFS_1"/>
    <property type="match status" value="1"/>
</dbReference>
<dbReference type="SUPFAM" id="SSF103473">
    <property type="entry name" value="MFS general substrate transporter"/>
    <property type="match status" value="1"/>
</dbReference>
<dbReference type="PROSITE" id="PS50850">
    <property type="entry name" value="MFS"/>
    <property type="match status" value="1"/>
</dbReference>
<reference key="1">
    <citation type="submission" date="2008-02" db="EMBL/GenBank/DDBJ databases">
        <title>Complete sequence of Escherichia coli C str. ATCC 8739.</title>
        <authorList>
            <person name="Copeland A."/>
            <person name="Lucas S."/>
            <person name="Lapidus A."/>
            <person name="Glavina del Rio T."/>
            <person name="Dalin E."/>
            <person name="Tice H."/>
            <person name="Bruce D."/>
            <person name="Goodwin L."/>
            <person name="Pitluck S."/>
            <person name="Kiss H."/>
            <person name="Brettin T."/>
            <person name="Detter J.C."/>
            <person name="Han C."/>
            <person name="Kuske C.R."/>
            <person name="Schmutz J."/>
            <person name="Larimer F."/>
            <person name="Land M."/>
            <person name="Hauser L."/>
            <person name="Kyrpides N."/>
            <person name="Mikhailova N."/>
            <person name="Ingram L."/>
            <person name="Richardson P."/>
        </authorList>
    </citation>
    <scope>NUCLEOTIDE SEQUENCE [LARGE SCALE GENOMIC DNA]</scope>
    <source>
        <strain>ATCC 8739 / DSM 1576 / NBRC 3972 / NCIMB 8545 / WDCM 00012 / Crooks</strain>
    </source>
</reference>
<proteinExistence type="inferred from homology"/>
<accession>B1IX28</accession>